<sequence length="369" mass="42828">MHIEKLELTNYRNYDQLEIAFDDQINVIIGENAQGKTNLMEAIYVLSFARSHRTPREKELIQWDKDYAKIEGRITKRNQSIPLQISITSKGKKAKVNHLEQHRLSDYIGSVNVVMFAPEDLTIVKGAPQIRRRFMDMELGQIQPTYIYHLAQYQKVLKQRNHLLKQLQRKPNSDTTMLEVLTDQLIEHASILLERRFIYLELLRKWAQPIHRGISRELEQLEIQYSPSIEVSEDANKEKIGNIYQMKFAEVKQKEIERGTTLAGPHRDDLIFFVNGKDVQTYGSQGQQRTTALSIKLAEIELIYQEVGEYPILLLDDVLSELDDYRQSHLLNTIQGKVQTFVSTTSVEGIHHETLQQAELFRVTDGVVN</sequence>
<proteinExistence type="inferred from homology"/>
<keyword id="KW-0067">ATP-binding</keyword>
<keyword id="KW-0963">Cytoplasm</keyword>
<keyword id="KW-0227">DNA damage</keyword>
<keyword id="KW-0234">DNA repair</keyword>
<keyword id="KW-0235">DNA replication</keyword>
<keyword id="KW-0238">DNA-binding</keyword>
<keyword id="KW-0547">Nucleotide-binding</keyword>
<keyword id="KW-1185">Reference proteome</keyword>
<keyword id="KW-0742">SOS response</keyword>
<protein>
    <recommendedName>
        <fullName evidence="1">DNA replication and repair protein RecF</fullName>
    </recommendedName>
</protein>
<accession>Q8EU85</accession>
<organism>
    <name type="scientific">Oceanobacillus iheyensis (strain DSM 14371 / CIP 107618 / JCM 11309 / KCTC 3954 / HTE831)</name>
    <dbReference type="NCBI Taxonomy" id="221109"/>
    <lineage>
        <taxon>Bacteria</taxon>
        <taxon>Bacillati</taxon>
        <taxon>Bacillota</taxon>
        <taxon>Bacilli</taxon>
        <taxon>Bacillales</taxon>
        <taxon>Bacillaceae</taxon>
        <taxon>Oceanobacillus</taxon>
    </lineage>
</organism>
<name>RECF_OCEIH</name>
<gene>
    <name evidence="1" type="primary">recF</name>
    <name type="ordered locus">OB0004</name>
</gene>
<evidence type="ECO:0000255" key="1">
    <source>
        <dbReference type="HAMAP-Rule" id="MF_00365"/>
    </source>
</evidence>
<comment type="function">
    <text evidence="1">The RecF protein is involved in DNA metabolism; it is required for DNA replication and normal SOS inducibility. RecF binds preferentially to single-stranded, linear DNA. It also seems to bind ATP.</text>
</comment>
<comment type="subcellular location">
    <subcellularLocation>
        <location evidence="1">Cytoplasm</location>
    </subcellularLocation>
</comment>
<comment type="similarity">
    <text evidence="1">Belongs to the RecF family.</text>
</comment>
<feature type="chain" id="PRO_0000196436" description="DNA replication and repair protein RecF">
    <location>
        <begin position="1"/>
        <end position="369"/>
    </location>
</feature>
<feature type="binding site" evidence="1">
    <location>
        <begin position="30"/>
        <end position="37"/>
    </location>
    <ligand>
        <name>ATP</name>
        <dbReference type="ChEBI" id="CHEBI:30616"/>
    </ligand>
</feature>
<reference key="1">
    <citation type="journal article" date="2002" name="Nucleic Acids Res.">
        <title>Genome sequence of Oceanobacillus iheyensis isolated from the Iheya Ridge and its unexpected adaptive capabilities to extreme environments.</title>
        <authorList>
            <person name="Takami H."/>
            <person name="Takaki Y."/>
            <person name="Uchiyama I."/>
        </authorList>
    </citation>
    <scope>NUCLEOTIDE SEQUENCE [LARGE SCALE GENOMIC DNA]</scope>
    <source>
        <strain>DSM 14371 / CIP 107618 / JCM 11309 / KCTC 3954 / HTE831</strain>
    </source>
</reference>
<dbReference type="EMBL" id="BA000028">
    <property type="protein sequence ID" value="BAC11960.1"/>
    <property type="molecule type" value="Genomic_DNA"/>
</dbReference>
<dbReference type="RefSeq" id="WP_011064406.1">
    <property type="nucleotide sequence ID" value="NC_004193.1"/>
</dbReference>
<dbReference type="SMR" id="Q8EU85"/>
<dbReference type="STRING" id="221109.gene:10732165"/>
<dbReference type="KEGG" id="oih:OB0004"/>
<dbReference type="eggNOG" id="COG1195">
    <property type="taxonomic scope" value="Bacteria"/>
</dbReference>
<dbReference type="HOGENOM" id="CLU_040267_0_1_9"/>
<dbReference type="OrthoDB" id="9803889at2"/>
<dbReference type="PhylomeDB" id="Q8EU85"/>
<dbReference type="Proteomes" id="UP000000822">
    <property type="component" value="Chromosome"/>
</dbReference>
<dbReference type="GO" id="GO:0005737">
    <property type="term" value="C:cytoplasm"/>
    <property type="evidence" value="ECO:0007669"/>
    <property type="project" value="UniProtKB-SubCell"/>
</dbReference>
<dbReference type="GO" id="GO:0005524">
    <property type="term" value="F:ATP binding"/>
    <property type="evidence" value="ECO:0007669"/>
    <property type="project" value="UniProtKB-UniRule"/>
</dbReference>
<dbReference type="GO" id="GO:0003697">
    <property type="term" value="F:single-stranded DNA binding"/>
    <property type="evidence" value="ECO:0007669"/>
    <property type="project" value="UniProtKB-UniRule"/>
</dbReference>
<dbReference type="GO" id="GO:0006260">
    <property type="term" value="P:DNA replication"/>
    <property type="evidence" value="ECO:0007669"/>
    <property type="project" value="UniProtKB-UniRule"/>
</dbReference>
<dbReference type="GO" id="GO:0000731">
    <property type="term" value="P:DNA synthesis involved in DNA repair"/>
    <property type="evidence" value="ECO:0007669"/>
    <property type="project" value="TreeGrafter"/>
</dbReference>
<dbReference type="GO" id="GO:0006302">
    <property type="term" value="P:double-strand break repair"/>
    <property type="evidence" value="ECO:0007669"/>
    <property type="project" value="TreeGrafter"/>
</dbReference>
<dbReference type="GO" id="GO:0009432">
    <property type="term" value="P:SOS response"/>
    <property type="evidence" value="ECO:0007669"/>
    <property type="project" value="UniProtKB-UniRule"/>
</dbReference>
<dbReference type="CDD" id="cd03242">
    <property type="entry name" value="ABC_RecF"/>
    <property type="match status" value="1"/>
</dbReference>
<dbReference type="FunFam" id="1.20.1050.90:FF:000002">
    <property type="entry name" value="DNA replication and repair protein RecF"/>
    <property type="match status" value="1"/>
</dbReference>
<dbReference type="Gene3D" id="3.40.50.300">
    <property type="entry name" value="P-loop containing nucleotide triphosphate hydrolases"/>
    <property type="match status" value="1"/>
</dbReference>
<dbReference type="Gene3D" id="1.20.1050.90">
    <property type="entry name" value="RecF/RecN/SMC, N-terminal domain"/>
    <property type="match status" value="1"/>
</dbReference>
<dbReference type="HAMAP" id="MF_00365">
    <property type="entry name" value="RecF"/>
    <property type="match status" value="1"/>
</dbReference>
<dbReference type="InterPro" id="IPR001238">
    <property type="entry name" value="DNA-binding_RecF"/>
</dbReference>
<dbReference type="InterPro" id="IPR018078">
    <property type="entry name" value="DNA-binding_RecF_CS"/>
</dbReference>
<dbReference type="InterPro" id="IPR027417">
    <property type="entry name" value="P-loop_NTPase"/>
</dbReference>
<dbReference type="InterPro" id="IPR003395">
    <property type="entry name" value="RecF/RecN/SMC_N"/>
</dbReference>
<dbReference type="InterPro" id="IPR042174">
    <property type="entry name" value="RecF_2"/>
</dbReference>
<dbReference type="NCBIfam" id="TIGR00611">
    <property type="entry name" value="recf"/>
    <property type="match status" value="1"/>
</dbReference>
<dbReference type="PANTHER" id="PTHR32182">
    <property type="entry name" value="DNA REPLICATION AND REPAIR PROTEIN RECF"/>
    <property type="match status" value="1"/>
</dbReference>
<dbReference type="PANTHER" id="PTHR32182:SF0">
    <property type="entry name" value="DNA REPLICATION AND REPAIR PROTEIN RECF"/>
    <property type="match status" value="1"/>
</dbReference>
<dbReference type="Pfam" id="PF02463">
    <property type="entry name" value="SMC_N"/>
    <property type="match status" value="1"/>
</dbReference>
<dbReference type="SUPFAM" id="SSF52540">
    <property type="entry name" value="P-loop containing nucleoside triphosphate hydrolases"/>
    <property type="match status" value="1"/>
</dbReference>
<dbReference type="PROSITE" id="PS00617">
    <property type="entry name" value="RECF_1"/>
    <property type="match status" value="1"/>
</dbReference>
<dbReference type="PROSITE" id="PS00618">
    <property type="entry name" value="RECF_2"/>
    <property type="match status" value="1"/>
</dbReference>